<gene>
    <name evidence="1" type="primary">pnp</name>
    <name type="ordered locus">NGO_0335</name>
</gene>
<reference key="1">
    <citation type="submission" date="2003-03" db="EMBL/GenBank/DDBJ databases">
        <title>The complete genome sequence of Neisseria gonorrhoeae.</title>
        <authorList>
            <person name="Lewis L.A."/>
            <person name="Gillaspy A.F."/>
            <person name="McLaughlin R.E."/>
            <person name="Gipson M."/>
            <person name="Ducey T.F."/>
            <person name="Ownbey T."/>
            <person name="Hartman K."/>
            <person name="Nydick C."/>
            <person name="Carson M.B."/>
            <person name="Vaughn J."/>
            <person name="Thomson C."/>
            <person name="Song L."/>
            <person name="Lin S."/>
            <person name="Yuan X."/>
            <person name="Najar F."/>
            <person name="Zhan M."/>
            <person name="Ren Q."/>
            <person name="Zhu H."/>
            <person name="Qi S."/>
            <person name="Kenton S.M."/>
            <person name="Lai H."/>
            <person name="White J.D."/>
            <person name="Clifton S."/>
            <person name="Roe B.A."/>
            <person name="Dyer D.W."/>
        </authorList>
    </citation>
    <scope>NUCLEOTIDE SEQUENCE [LARGE SCALE GENOMIC DNA]</scope>
    <source>
        <strain>ATCC 700825 / FA 1090</strain>
    </source>
</reference>
<feature type="chain" id="PRO_0000329729" description="Polyribonucleotide nucleotidyltransferase">
    <location>
        <begin position="1"/>
        <end position="706"/>
    </location>
</feature>
<feature type="domain" description="KH" evidence="1">
    <location>
        <begin position="553"/>
        <end position="612"/>
    </location>
</feature>
<feature type="domain" description="S1 motif" evidence="1">
    <location>
        <begin position="622"/>
        <end position="692"/>
    </location>
</feature>
<feature type="binding site" evidence="1">
    <location>
        <position position="487"/>
    </location>
    <ligand>
        <name>Mg(2+)</name>
        <dbReference type="ChEBI" id="CHEBI:18420"/>
    </ligand>
</feature>
<feature type="binding site" evidence="1">
    <location>
        <position position="493"/>
    </location>
    <ligand>
        <name>Mg(2+)</name>
        <dbReference type="ChEBI" id="CHEBI:18420"/>
    </ligand>
</feature>
<name>PNP_NEIG1</name>
<sequence>MFNKYVKTFQYGNQTVTLETGEIARQAAAAVKVSMGDTVVFVAVTTNKEVKEGQDFFPLAVDYLERTYAAGKIPGGFFKREGKQSEKEILTSRLIDRPIRPLFPEGFYHDIQIVAMVVSVDPEIDSDIPAMLGASAALVLSGVPFAGPIGAARVGYINGVYVLNPTKAELAKSQLDLVVAGTSKAVLMVESEAKILPEDVMLGAVVYGHDQMQVAINAINEFADEVNPEVWDWKAPETNEELVAKVRGIAGETIKEAFKIRQKQARSAKLDEAWNAVKEALITEETDTLAANEIKGIFKRLEADVVRSQILDGQPRIDGRDTRTVRPLNIQTGVLPRTHGSALFTRGETQALAVATLGTSRDEQIIDALSGEYTDRFMLHYNFPPYSTGEVGRMGAPKRREIGHGRLAKRALLAVLPKPEDFSYTMRVVSEITESNGSSSMASVCGGCLSLLSAGVPLKAHVAGIAMGLILEGNKFAVLTDILGDEDHLGDMDFKVAGTTEGVTALQMDIKIQGITKEIMQIALAQAKEARLHILDQMKAAVAGPQELSAHAPRLFTMKISQDKIRDVIGKGGETIRSITAETGTEINIAEDGTITIAATTQEAGDAAKKRIEEITAEVEVGKVYEGTVVKILDNNVGAIVSVMPGKDGLVHISQIAHERVRNVGDYLQVGQVVNVKALEVDDRGRVRLSIKALLDAPVREENAAE</sequence>
<accession>Q5F9Q7</accession>
<evidence type="ECO:0000255" key="1">
    <source>
        <dbReference type="HAMAP-Rule" id="MF_01595"/>
    </source>
</evidence>
<keyword id="KW-0963">Cytoplasm</keyword>
<keyword id="KW-0460">Magnesium</keyword>
<keyword id="KW-0479">Metal-binding</keyword>
<keyword id="KW-0548">Nucleotidyltransferase</keyword>
<keyword id="KW-1185">Reference proteome</keyword>
<keyword id="KW-0694">RNA-binding</keyword>
<keyword id="KW-0808">Transferase</keyword>
<organism>
    <name type="scientific">Neisseria gonorrhoeae (strain ATCC 700825 / FA 1090)</name>
    <dbReference type="NCBI Taxonomy" id="242231"/>
    <lineage>
        <taxon>Bacteria</taxon>
        <taxon>Pseudomonadati</taxon>
        <taxon>Pseudomonadota</taxon>
        <taxon>Betaproteobacteria</taxon>
        <taxon>Neisseriales</taxon>
        <taxon>Neisseriaceae</taxon>
        <taxon>Neisseria</taxon>
    </lineage>
</organism>
<comment type="function">
    <text evidence="1">Involved in mRNA degradation. Catalyzes the phosphorolysis of single-stranded polyribonucleotides processively in the 3'- to 5'-direction.</text>
</comment>
<comment type="catalytic activity">
    <reaction evidence="1">
        <text>RNA(n+1) + phosphate = RNA(n) + a ribonucleoside 5'-diphosphate</text>
        <dbReference type="Rhea" id="RHEA:22096"/>
        <dbReference type="Rhea" id="RHEA-COMP:14527"/>
        <dbReference type="Rhea" id="RHEA-COMP:17342"/>
        <dbReference type="ChEBI" id="CHEBI:43474"/>
        <dbReference type="ChEBI" id="CHEBI:57930"/>
        <dbReference type="ChEBI" id="CHEBI:140395"/>
        <dbReference type="EC" id="2.7.7.8"/>
    </reaction>
</comment>
<comment type="cofactor">
    <cofactor evidence="1">
        <name>Mg(2+)</name>
        <dbReference type="ChEBI" id="CHEBI:18420"/>
    </cofactor>
</comment>
<comment type="subcellular location">
    <subcellularLocation>
        <location evidence="1">Cytoplasm</location>
    </subcellularLocation>
</comment>
<comment type="similarity">
    <text evidence="1">Belongs to the polyribonucleotide nucleotidyltransferase family.</text>
</comment>
<dbReference type="EC" id="2.7.7.8" evidence="1"/>
<dbReference type="EMBL" id="AE004969">
    <property type="protein sequence ID" value="AAW89080.2"/>
    <property type="molecule type" value="Genomic_DNA"/>
</dbReference>
<dbReference type="SMR" id="Q5F9Q7"/>
<dbReference type="STRING" id="242231.NGO_0335"/>
<dbReference type="KEGG" id="ngo:NGO_0335"/>
<dbReference type="PATRIC" id="fig|242231.10.peg.408"/>
<dbReference type="HOGENOM" id="CLU_004217_2_2_4"/>
<dbReference type="Proteomes" id="UP000000535">
    <property type="component" value="Chromosome"/>
</dbReference>
<dbReference type="GO" id="GO:0005829">
    <property type="term" value="C:cytosol"/>
    <property type="evidence" value="ECO:0007669"/>
    <property type="project" value="TreeGrafter"/>
</dbReference>
<dbReference type="GO" id="GO:0000175">
    <property type="term" value="F:3'-5'-RNA exonuclease activity"/>
    <property type="evidence" value="ECO:0007669"/>
    <property type="project" value="TreeGrafter"/>
</dbReference>
<dbReference type="GO" id="GO:0000287">
    <property type="term" value="F:magnesium ion binding"/>
    <property type="evidence" value="ECO:0007669"/>
    <property type="project" value="UniProtKB-UniRule"/>
</dbReference>
<dbReference type="GO" id="GO:0004654">
    <property type="term" value="F:polyribonucleotide nucleotidyltransferase activity"/>
    <property type="evidence" value="ECO:0007669"/>
    <property type="project" value="UniProtKB-UniRule"/>
</dbReference>
<dbReference type="GO" id="GO:0003723">
    <property type="term" value="F:RNA binding"/>
    <property type="evidence" value="ECO:0007669"/>
    <property type="project" value="UniProtKB-UniRule"/>
</dbReference>
<dbReference type="GO" id="GO:0006402">
    <property type="term" value="P:mRNA catabolic process"/>
    <property type="evidence" value="ECO:0007669"/>
    <property type="project" value="UniProtKB-UniRule"/>
</dbReference>
<dbReference type="GO" id="GO:0006396">
    <property type="term" value="P:RNA processing"/>
    <property type="evidence" value="ECO:0007669"/>
    <property type="project" value="InterPro"/>
</dbReference>
<dbReference type="CDD" id="cd02393">
    <property type="entry name" value="KH-I_PNPase"/>
    <property type="match status" value="1"/>
</dbReference>
<dbReference type="CDD" id="cd11363">
    <property type="entry name" value="RNase_PH_PNPase_1"/>
    <property type="match status" value="1"/>
</dbReference>
<dbReference type="CDD" id="cd11364">
    <property type="entry name" value="RNase_PH_PNPase_2"/>
    <property type="match status" value="1"/>
</dbReference>
<dbReference type="CDD" id="cd04472">
    <property type="entry name" value="S1_PNPase"/>
    <property type="match status" value="1"/>
</dbReference>
<dbReference type="FunFam" id="3.30.1370.10:FF:000001">
    <property type="entry name" value="Polyribonucleotide nucleotidyltransferase"/>
    <property type="match status" value="1"/>
</dbReference>
<dbReference type="FunFam" id="3.30.230.70:FF:000001">
    <property type="entry name" value="Polyribonucleotide nucleotidyltransferase"/>
    <property type="match status" value="1"/>
</dbReference>
<dbReference type="FunFam" id="3.30.230.70:FF:000002">
    <property type="entry name" value="Polyribonucleotide nucleotidyltransferase"/>
    <property type="match status" value="1"/>
</dbReference>
<dbReference type="Gene3D" id="3.30.230.70">
    <property type="entry name" value="GHMP Kinase, N-terminal domain"/>
    <property type="match status" value="2"/>
</dbReference>
<dbReference type="Gene3D" id="3.30.1370.10">
    <property type="entry name" value="K Homology domain, type 1"/>
    <property type="match status" value="1"/>
</dbReference>
<dbReference type="Gene3D" id="2.40.50.140">
    <property type="entry name" value="Nucleic acid-binding proteins"/>
    <property type="match status" value="1"/>
</dbReference>
<dbReference type="HAMAP" id="MF_01595">
    <property type="entry name" value="PNPase"/>
    <property type="match status" value="1"/>
</dbReference>
<dbReference type="InterPro" id="IPR001247">
    <property type="entry name" value="ExoRNase_PH_dom1"/>
</dbReference>
<dbReference type="InterPro" id="IPR015847">
    <property type="entry name" value="ExoRNase_PH_dom2"/>
</dbReference>
<dbReference type="InterPro" id="IPR036345">
    <property type="entry name" value="ExoRNase_PH_dom2_sf"/>
</dbReference>
<dbReference type="InterPro" id="IPR004087">
    <property type="entry name" value="KH_dom"/>
</dbReference>
<dbReference type="InterPro" id="IPR004088">
    <property type="entry name" value="KH_dom_type_1"/>
</dbReference>
<dbReference type="InterPro" id="IPR036612">
    <property type="entry name" value="KH_dom_type_1_sf"/>
</dbReference>
<dbReference type="InterPro" id="IPR012340">
    <property type="entry name" value="NA-bd_OB-fold"/>
</dbReference>
<dbReference type="InterPro" id="IPR012162">
    <property type="entry name" value="PNPase"/>
</dbReference>
<dbReference type="InterPro" id="IPR027408">
    <property type="entry name" value="PNPase/RNase_PH_dom_sf"/>
</dbReference>
<dbReference type="InterPro" id="IPR015848">
    <property type="entry name" value="PNPase_PH_RNA-bd_bac/org-type"/>
</dbReference>
<dbReference type="InterPro" id="IPR020568">
    <property type="entry name" value="Ribosomal_Su5_D2-typ_SF"/>
</dbReference>
<dbReference type="InterPro" id="IPR003029">
    <property type="entry name" value="S1_domain"/>
</dbReference>
<dbReference type="NCBIfam" id="TIGR03591">
    <property type="entry name" value="polynuc_phos"/>
    <property type="match status" value="1"/>
</dbReference>
<dbReference type="NCBIfam" id="NF008805">
    <property type="entry name" value="PRK11824.1"/>
    <property type="match status" value="1"/>
</dbReference>
<dbReference type="PANTHER" id="PTHR11252">
    <property type="entry name" value="POLYRIBONUCLEOTIDE NUCLEOTIDYLTRANSFERASE"/>
    <property type="match status" value="1"/>
</dbReference>
<dbReference type="PANTHER" id="PTHR11252:SF0">
    <property type="entry name" value="POLYRIBONUCLEOTIDE NUCLEOTIDYLTRANSFERASE 1, MITOCHONDRIAL"/>
    <property type="match status" value="1"/>
</dbReference>
<dbReference type="Pfam" id="PF00013">
    <property type="entry name" value="KH_1"/>
    <property type="match status" value="1"/>
</dbReference>
<dbReference type="Pfam" id="PF03726">
    <property type="entry name" value="PNPase"/>
    <property type="match status" value="1"/>
</dbReference>
<dbReference type="Pfam" id="PF01138">
    <property type="entry name" value="RNase_PH"/>
    <property type="match status" value="2"/>
</dbReference>
<dbReference type="Pfam" id="PF03725">
    <property type="entry name" value="RNase_PH_C"/>
    <property type="match status" value="2"/>
</dbReference>
<dbReference type="Pfam" id="PF00575">
    <property type="entry name" value="S1"/>
    <property type="match status" value="1"/>
</dbReference>
<dbReference type="PIRSF" id="PIRSF005499">
    <property type="entry name" value="PNPase"/>
    <property type="match status" value="1"/>
</dbReference>
<dbReference type="SMART" id="SM00322">
    <property type="entry name" value="KH"/>
    <property type="match status" value="1"/>
</dbReference>
<dbReference type="SMART" id="SM00316">
    <property type="entry name" value="S1"/>
    <property type="match status" value="1"/>
</dbReference>
<dbReference type="SUPFAM" id="SSF54791">
    <property type="entry name" value="Eukaryotic type KH-domain (KH-domain type I)"/>
    <property type="match status" value="1"/>
</dbReference>
<dbReference type="SUPFAM" id="SSF50249">
    <property type="entry name" value="Nucleic acid-binding proteins"/>
    <property type="match status" value="1"/>
</dbReference>
<dbReference type="SUPFAM" id="SSF55666">
    <property type="entry name" value="Ribonuclease PH domain 2-like"/>
    <property type="match status" value="2"/>
</dbReference>
<dbReference type="SUPFAM" id="SSF54211">
    <property type="entry name" value="Ribosomal protein S5 domain 2-like"/>
    <property type="match status" value="2"/>
</dbReference>
<dbReference type="PROSITE" id="PS50084">
    <property type="entry name" value="KH_TYPE_1"/>
    <property type="match status" value="1"/>
</dbReference>
<dbReference type="PROSITE" id="PS50126">
    <property type="entry name" value="S1"/>
    <property type="match status" value="1"/>
</dbReference>
<proteinExistence type="inferred from homology"/>
<protein>
    <recommendedName>
        <fullName evidence="1">Polyribonucleotide nucleotidyltransferase</fullName>
        <ecNumber evidence="1">2.7.7.8</ecNumber>
    </recommendedName>
    <alternativeName>
        <fullName evidence="1">Polynucleotide phosphorylase</fullName>
        <shortName evidence="1">PNPase</shortName>
    </alternativeName>
</protein>